<sequence>MAGPVRCLPPVVEATSIPHAPPVISKEVSEIVNNMLSVAIPAAAAASAQDQRFASQFRCGPEFATMKAQALEACRKILAENDQGGYTIPAKGLYPYQWNWDSALVSLGLAEMEEERAWEELDRLMSAQWEDGMVPHIVFHKPSSTYFPGPEIWGSPDKPRNSTGITQPPVAAISVRRLLEEAKDKALALAMARKLFPKLLAWHRWFYRARDPEGTGLVATIHPWETGMDNSPAWDEALARVPIDDIPPYVRRDLGHVDAKMRPQKAEYDRYLTLLYRFRALDYDEAKLYYETPFRVTDLCTNCILHKANEDLLWLAGATGACTDESEIRGWTARANVAFDTLFDVEAGLYRCKDQLTGQFLPAATSAGFLPLFAGVASGEKASAVARTLGRWLDDVAYGIPSCDPRDPWFEALRYWRGPVWLIVNWMVSEGLKRYGYGELAQRVERDSYELVKNGGIFEYYCPLTGMGAGGGCFSWTAAMCLAWLFKS</sequence>
<dbReference type="EC" id="3.2.1.170" evidence="1"/>
<dbReference type="EMBL" id="GL377671">
    <property type="protein sequence ID" value="EFJ08650.1"/>
    <property type="molecule type" value="Genomic_DNA"/>
</dbReference>
<dbReference type="RefSeq" id="XP_002990235.1">
    <property type="nucleotide sequence ID" value="XM_002990189.1"/>
</dbReference>
<dbReference type="SMR" id="D8T3S4"/>
<dbReference type="STRING" id="88036.D8T3S4"/>
<dbReference type="EnsemblPlants" id="EFJ08650">
    <property type="protein sequence ID" value="EFJ08650"/>
    <property type="gene ID" value="SELMODRAFT_447962"/>
</dbReference>
<dbReference type="Gramene" id="EFJ08650">
    <property type="protein sequence ID" value="EFJ08650"/>
    <property type="gene ID" value="SELMODRAFT_447962"/>
</dbReference>
<dbReference type="KEGG" id="smo:SELMODRAFT_447962"/>
<dbReference type="eggNOG" id="ENOG502S06X">
    <property type="taxonomic scope" value="Eukaryota"/>
</dbReference>
<dbReference type="HOGENOM" id="CLU_015270_1_0_1"/>
<dbReference type="InParanoid" id="D8T3S4"/>
<dbReference type="OMA" id="NSPRWDS"/>
<dbReference type="OrthoDB" id="410058at2759"/>
<dbReference type="Proteomes" id="UP000001514">
    <property type="component" value="Unassembled WGS sequence"/>
</dbReference>
<dbReference type="GO" id="GO:0005789">
    <property type="term" value="C:endoplasmic reticulum membrane"/>
    <property type="evidence" value="ECO:0000318"/>
    <property type="project" value="GO_Central"/>
</dbReference>
<dbReference type="GO" id="GO:0004573">
    <property type="term" value="F:Glc3Man9GlcNAc2 oligosaccharide glucosidase activity"/>
    <property type="evidence" value="ECO:0000318"/>
    <property type="project" value="GO_Central"/>
</dbReference>
<dbReference type="GO" id="GO:0102546">
    <property type="term" value="F:mannosylglycerate hydrolase activity"/>
    <property type="evidence" value="ECO:0007669"/>
    <property type="project" value="UniProtKB-EC"/>
</dbReference>
<dbReference type="GO" id="GO:0009311">
    <property type="term" value="P:oligosaccharide metabolic process"/>
    <property type="evidence" value="ECO:0007669"/>
    <property type="project" value="InterPro"/>
</dbReference>
<dbReference type="GO" id="GO:0006487">
    <property type="term" value="P:protein N-linked glycosylation"/>
    <property type="evidence" value="ECO:0000318"/>
    <property type="project" value="GO_Central"/>
</dbReference>
<dbReference type="Gene3D" id="1.50.10.10">
    <property type="match status" value="1"/>
</dbReference>
<dbReference type="InterPro" id="IPR008928">
    <property type="entry name" value="6-hairpin_glycosidase_sf"/>
</dbReference>
<dbReference type="InterPro" id="IPR012341">
    <property type="entry name" value="6hp_glycosidase-like_sf"/>
</dbReference>
<dbReference type="InterPro" id="IPR004888">
    <property type="entry name" value="Glycoside_hydrolase_63"/>
</dbReference>
<dbReference type="InterPro" id="IPR054491">
    <property type="entry name" value="MGH1-like_GH"/>
</dbReference>
<dbReference type="PANTHER" id="PTHR10412">
    <property type="entry name" value="MANNOSYL-OLIGOSACCHARIDE GLUCOSIDASE"/>
    <property type="match status" value="1"/>
</dbReference>
<dbReference type="PANTHER" id="PTHR10412:SF11">
    <property type="entry name" value="MANNOSYL-OLIGOSACCHARIDE GLUCOSIDASE"/>
    <property type="match status" value="1"/>
</dbReference>
<dbReference type="Pfam" id="PF22422">
    <property type="entry name" value="MGH1-like_GH"/>
    <property type="match status" value="1"/>
</dbReference>
<dbReference type="SUPFAM" id="SSF48208">
    <property type="entry name" value="Six-hairpin glycosidases"/>
    <property type="match status" value="1"/>
</dbReference>
<proteinExistence type="inferred from homology"/>
<name>MGH2_SELML</name>
<reference key="1">
    <citation type="journal article" date="2011" name="Science">
        <title>The Selaginella genome identifies genetic changes associated with the evolution of vascular plants.</title>
        <authorList>
            <person name="Banks J.A."/>
            <person name="Nishiyama T."/>
            <person name="Hasebe M."/>
            <person name="Bowman J.L."/>
            <person name="Gribskov M."/>
            <person name="dePamphilis C."/>
            <person name="Albert V.A."/>
            <person name="Aono N."/>
            <person name="Aoyama T."/>
            <person name="Ambrose B.A."/>
            <person name="Ashton N.W."/>
            <person name="Axtell M.J."/>
            <person name="Barker E."/>
            <person name="Barker M.S."/>
            <person name="Bennetzen J.L."/>
            <person name="Bonawitz N.D."/>
            <person name="Chapple C."/>
            <person name="Cheng C."/>
            <person name="Correa L.G."/>
            <person name="Dacre M."/>
            <person name="DeBarry J."/>
            <person name="Dreyer I."/>
            <person name="Elias M."/>
            <person name="Engstrom E.M."/>
            <person name="Estelle M."/>
            <person name="Feng L."/>
            <person name="Finet C."/>
            <person name="Floyd S.K."/>
            <person name="Frommer W.B."/>
            <person name="Fujita T."/>
            <person name="Gramzow L."/>
            <person name="Gutensohn M."/>
            <person name="Harholt J."/>
            <person name="Hattori M."/>
            <person name="Heyl A."/>
            <person name="Hirai T."/>
            <person name="Hiwatashi Y."/>
            <person name="Ishikawa M."/>
            <person name="Iwata M."/>
            <person name="Karol K.G."/>
            <person name="Koehler B."/>
            <person name="Kolukisaoglu U."/>
            <person name="Kubo M."/>
            <person name="Kurata T."/>
            <person name="Lalonde S."/>
            <person name="Li K."/>
            <person name="Li Y."/>
            <person name="Litt A."/>
            <person name="Lyons E."/>
            <person name="Manning G."/>
            <person name="Maruyama T."/>
            <person name="Michael T.P."/>
            <person name="Mikami K."/>
            <person name="Miyazaki S."/>
            <person name="Morinaga S."/>
            <person name="Murata T."/>
            <person name="Mueller-Roeber B."/>
            <person name="Nelson D.R."/>
            <person name="Obara M."/>
            <person name="Oguri Y."/>
            <person name="Olmstead R.G."/>
            <person name="Onodera N."/>
            <person name="Petersen B.L."/>
            <person name="Pils B."/>
            <person name="Prigge M."/>
            <person name="Rensing S.A."/>
            <person name="Riano-Pachon D.M."/>
            <person name="Roberts A.W."/>
            <person name="Sato Y."/>
            <person name="Scheller H.V."/>
            <person name="Schulz B."/>
            <person name="Schulz C."/>
            <person name="Shakirov E.V."/>
            <person name="Shibagaki N."/>
            <person name="Shinohara N."/>
            <person name="Shippen D.E."/>
            <person name="Soerensen I."/>
            <person name="Sotooka R."/>
            <person name="Sugimoto N."/>
            <person name="Sugita M."/>
            <person name="Sumikawa N."/>
            <person name="Tanurdzic M."/>
            <person name="Theissen G."/>
            <person name="Ulvskov P."/>
            <person name="Wakazuki S."/>
            <person name="Weng J.K."/>
            <person name="Willats W.W."/>
            <person name="Wipf D."/>
            <person name="Wolf P.G."/>
            <person name="Yang L."/>
            <person name="Zimmer A.D."/>
            <person name="Zhu Q."/>
            <person name="Mitros T."/>
            <person name="Hellsten U."/>
            <person name="Loque D."/>
            <person name="Otillar R."/>
            <person name="Salamov A."/>
            <person name="Schmutz J."/>
            <person name="Shapiro H."/>
            <person name="Lindquist E."/>
            <person name="Lucas S."/>
            <person name="Rokhsar D."/>
            <person name="Grigoriev I.V."/>
        </authorList>
    </citation>
    <scope>NUCLEOTIDE SEQUENCE [LARGE SCALE GENOMIC DNA]</scope>
</reference>
<keyword id="KW-0326">Glycosidase</keyword>
<keyword id="KW-0378">Hydrolase</keyword>
<keyword id="KW-1185">Reference proteome</keyword>
<feature type="chain" id="PRO_0000451957" description="Mannosylglycerate hydrolase MGH2">
    <location>
        <begin position="1"/>
        <end position="488"/>
    </location>
</feature>
<feature type="active site" description="Proton donor" evidence="2">
    <location>
        <position position="229"/>
    </location>
</feature>
<feature type="active site" description="Proton acceptor" evidence="2">
    <location>
        <position position="459"/>
    </location>
</feature>
<feature type="binding site" evidence="2">
    <location>
        <position position="94"/>
    </location>
    <ligand>
        <name>substrate</name>
    </ligand>
</feature>
<feature type="binding site" evidence="2">
    <location>
        <begin position="98"/>
        <end position="101"/>
    </location>
    <ligand>
        <name>substrate</name>
    </ligand>
</feature>
<feature type="binding site" evidence="2">
    <location>
        <position position="146"/>
    </location>
    <ligand>
        <name>substrate</name>
    </ligand>
</feature>
<feature type="binding site" evidence="2">
    <location>
        <position position="167"/>
    </location>
    <ligand>
        <name>substrate</name>
    </ligand>
</feature>
<feature type="binding site" evidence="2">
    <location>
        <position position="227"/>
    </location>
    <ligand>
        <name>substrate</name>
    </ligand>
</feature>
<feature type="binding site" evidence="2">
    <location>
        <position position="262"/>
    </location>
    <ligand>
        <name>substrate</name>
    </ligand>
</feature>
<feature type="binding site" evidence="2">
    <location>
        <begin position="415"/>
        <end position="416"/>
    </location>
    <ligand>
        <name>substrate</name>
    </ligand>
</feature>
<protein>
    <recommendedName>
        <fullName evidence="3">Mannosylglycerate hydrolase MGH2</fullName>
        <ecNumber evidence="1">3.2.1.170</ecNumber>
    </recommendedName>
</protein>
<organism>
    <name type="scientific">Selaginella moellendorffii</name>
    <name type="common">Spikemoss</name>
    <dbReference type="NCBI Taxonomy" id="88036"/>
    <lineage>
        <taxon>Eukaryota</taxon>
        <taxon>Viridiplantae</taxon>
        <taxon>Streptophyta</taxon>
        <taxon>Embryophyta</taxon>
        <taxon>Tracheophyta</taxon>
        <taxon>Lycopodiopsida</taxon>
        <taxon>Selaginellales</taxon>
        <taxon>Selaginellaceae</taxon>
        <taxon>Selaginella</taxon>
    </lineage>
</organism>
<accession>D8T3S4</accession>
<gene>
    <name evidence="4" type="ORF">SELMODRAFT_447962</name>
</gene>
<evidence type="ECO:0000250" key="1">
    <source>
        <dbReference type="UniProtKB" id="D8QTR2"/>
    </source>
</evidence>
<evidence type="ECO:0000250" key="2">
    <source>
        <dbReference type="UniProtKB" id="K5BDL0"/>
    </source>
</evidence>
<evidence type="ECO:0000305" key="3"/>
<evidence type="ECO:0000312" key="4">
    <source>
        <dbReference type="EMBL" id="EFJ08650.1"/>
    </source>
</evidence>
<comment type="function">
    <text evidence="1">Catalyzes the hydrolysis of alpha-D-mannosyl-glycerate (MG) to D-glycerate and D-mannose. Can also hydrolyze alpha-D-glucopyranosyl-glycerate (GG)with lower efficiency.</text>
</comment>
<comment type="catalytic activity">
    <reaction evidence="1">
        <text>(2R)-2-O-(alpha-D-mannosyl)-glycerate + H2O = D-mannose + (R)-glycerate</text>
        <dbReference type="Rhea" id="RHEA:58456"/>
        <dbReference type="ChEBI" id="CHEBI:4208"/>
        <dbReference type="ChEBI" id="CHEBI:15377"/>
        <dbReference type="ChEBI" id="CHEBI:16659"/>
        <dbReference type="ChEBI" id="CHEBI:57541"/>
        <dbReference type="EC" id="3.2.1.170"/>
    </reaction>
    <physiologicalReaction direction="left-to-right" evidence="1">
        <dbReference type="Rhea" id="RHEA:58457"/>
    </physiologicalReaction>
</comment>
<comment type="catalytic activity">
    <reaction evidence="1">
        <text>(2R)-2-O-(alpha-D-glucopyranosyl)-glycerate + H2O = (R)-glycerate + D-glucose</text>
        <dbReference type="Rhea" id="RHEA:32059"/>
        <dbReference type="ChEBI" id="CHEBI:4167"/>
        <dbReference type="ChEBI" id="CHEBI:15377"/>
        <dbReference type="ChEBI" id="CHEBI:16659"/>
        <dbReference type="ChEBI" id="CHEBI:62510"/>
    </reaction>
    <physiologicalReaction direction="left-to-right" evidence="1">
        <dbReference type="Rhea" id="RHEA:32060"/>
    </physiologicalReaction>
</comment>
<comment type="activity regulation">
    <text evidence="1">Activity is not dependent on divalent cations, but it is enhanced by Mn(2+).</text>
</comment>
<comment type="similarity">
    <text evidence="3">Belongs to the glycosyl hydrolase 63 family.</text>
</comment>